<proteinExistence type="inferred from homology"/>
<keyword id="KW-0687">Ribonucleoprotein</keyword>
<keyword id="KW-0689">Ribosomal protein</keyword>
<keyword id="KW-0694">RNA-binding</keyword>
<keyword id="KW-0699">rRNA-binding</keyword>
<organism>
    <name type="scientific">Klebsiella pneumoniae subsp. pneumoniae (strain ATCC 700721 / MGH 78578)</name>
    <dbReference type="NCBI Taxonomy" id="272620"/>
    <lineage>
        <taxon>Bacteria</taxon>
        <taxon>Pseudomonadati</taxon>
        <taxon>Pseudomonadota</taxon>
        <taxon>Gammaproteobacteria</taxon>
        <taxon>Enterobacterales</taxon>
        <taxon>Enterobacteriaceae</taxon>
        <taxon>Klebsiella/Raoultella group</taxon>
        <taxon>Klebsiella</taxon>
        <taxon>Klebsiella pneumoniae complex</taxon>
    </lineage>
</organism>
<comment type="function">
    <text evidence="1">One of the primary rRNA binding proteins, it binds directly to 16S rRNA central domain where it helps coordinate assembly of the platform of the 30S subunit.</text>
</comment>
<comment type="subunit">
    <text evidence="1">Part of the 30S ribosomal subunit. Contacts proteins S5 and S12.</text>
</comment>
<comment type="similarity">
    <text evidence="1">Belongs to the universal ribosomal protein uS8 family.</text>
</comment>
<gene>
    <name evidence="1" type="primary">rpsH</name>
    <name type="ordered locus">KPN78578_36680</name>
    <name type="ORF">KPN_03705</name>
</gene>
<reference key="1">
    <citation type="submission" date="2006-09" db="EMBL/GenBank/DDBJ databases">
        <authorList>
            <consortium name="The Klebsiella pneumonia Genome Sequencing Project"/>
            <person name="McClelland M."/>
            <person name="Sanderson E.K."/>
            <person name="Spieth J."/>
            <person name="Clifton W.S."/>
            <person name="Latreille P."/>
            <person name="Sabo A."/>
            <person name="Pepin K."/>
            <person name="Bhonagiri V."/>
            <person name="Porwollik S."/>
            <person name="Ali J."/>
            <person name="Wilson R.K."/>
        </authorList>
    </citation>
    <scope>NUCLEOTIDE SEQUENCE [LARGE SCALE GENOMIC DNA]</scope>
    <source>
        <strain>ATCC 700721 / MGH 78578</strain>
    </source>
</reference>
<sequence>MSMQDPIADMLTRIRNGQAANKAAVTMPSSKLKVAIANVLKEEGFIEDFKVEGDTKPELELTLKYFQGKAVVESIQRVSRPGLRIYKKKDELPKVMAGLGIAVVSTSKGVMTDRAARQAGLGGEIICYVA</sequence>
<accession>A6TEV8</accession>
<feature type="chain" id="PRO_1000051783" description="Small ribosomal subunit protein uS8">
    <location>
        <begin position="1"/>
        <end position="130"/>
    </location>
</feature>
<protein>
    <recommendedName>
        <fullName evidence="1">Small ribosomal subunit protein uS8</fullName>
    </recommendedName>
    <alternativeName>
        <fullName evidence="2">30S ribosomal protein S8</fullName>
    </alternativeName>
</protein>
<name>RS8_KLEP7</name>
<evidence type="ECO:0000255" key="1">
    <source>
        <dbReference type="HAMAP-Rule" id="MF_01302"/>
    </source>
</evidence>
<evidence type="ECO:0000305" key="2"/>
<dbReference type="EMBL" id="CP000647">
    <property type="protein sequence ID" value="ABR79092.1"/>
    <property type="molecule type" value="Genomic_DNA"/>
</dbReference>
<dbReference type="RefSeq" id="WP_002919665.1">
    <property type="nucleotide sequence ID" value="NC_009648.1"/>
</dbReference>
<dbReference type="SMR" id="A6TEV8"/>
<dbReference type="STRING" id="272620.KPN_03705"/>
<dbReference type="jPOST" id="A6TEV8"/>
<dbReference type="PaxDb" id="272620-KPN_03705"/>
<dbReference type="EnsemblBacteria" id="ABR79092">
    <property type="protein sequence ID" value="ABR79092"/>
    <property type="gene ID" value="KPN_03705"/>
</dbReference>
<dbReference type="GeneID" id="93251033"/>
<dbReference type="KEGG" id="kpn:KPN_03705"/>
<dbReference type="HOGENOM" id="CLU_098428_0_0_6"/>
<dbReference type="Proteomes" id="UP000000265">
    <property type="component" value="Chromosome"/>
</dbReference>
<dbReference type="GO" id="GO:1990904">
    <property type="term" value="C:ribonucleoprotein complex"/>
    <property type="evidence" value="ECO:0007669"/>
    <property type="project" value="UniProtKB-KW"/>
</dbReference>
<dbReference type="GO" id="GO:0005840">
    <property type="term" value="C:ribosome"/>
    <property type="evidence" value="ECO:0007669"/>
    <property type="project" value="UniProtKB-KW"/>
</dbReference>
<dbReference type="GO" id="GO:0019843">
    <property type="term" value="F:rRNA binding"/>
    <property type="evidence" value="ECO:0007669"/>
    <property type="project" value="UniProtKB-UniRule"/>
</dbReference>
<dbReference type="GO" id="GO:0003735">
    <property type="term" value="F:structural constituent of ribosome"/>
    <property type="evidence" value="ECO:0007669"/>
    <property type="project" value="InterPro"/>
</dbReference>
<dbReference type="GO" id="GO:0006412">
    <property type="term" value="P:translation"/>
    <property type="evidence" value="ECO:0007669"/>
    <property type="project" value="UniProtKB-UniRule"/>
</dbReference>
<dbReference type="FunFam" id="3.30.1370.30:FF:000003">
    <property type="entry name" value="30S ribosomal protein S8"/>
    <property type="match status" value="1"/>
</dbReference>
<dbReference type="FunFam" id="3.30.1490.10:FF:000001">
    <property type="entry name" value="30S ribosomal protein S8"/>
    <property type="match status" value="1"/>
</dbReference>
<dbReference type="Gene3D" id="3.30.1370.30">
    <property type="match status" value="1"/>
</dbReference>
<dbReference type="Gene3D" id="3.30.1490.10">
    <property type="match status" value="1"/>
</dbReference>
<dbReference type="HAMAP" id="MF_01302_B">
    <property type="entry name" value="Ribosomal_uS8_B"/>
    <property type="match status" value="1"/>
</dbReference>
<dbReference type="InterPro" id="IPR000630">
    <property type="entry name" value="Ribosomal_uS8"/>
</dbReference>
<dbReference type="InterPro" id="IPR047863">
    <property type="entry name" value="Ribosomal_uS8_CS"/>
</dbReference>
<dbReference type="InterPro" id="IPR035987">
    <property type="entry name" value="Ribosomal_uS8_sf"/>
</dbReference>
<dbReference type="NCBIfam" id="NF001109">
    <property type="entry name" value="PRK00136.1"/>
    <property type="match status" value="1"/>
</dbReference>
<dbReference type="PANTHER" id="PTHR11758">
    <property type="entry name" value="40S RIBOSOMAL PROTEIN S15A"/>
    <property type="match status" value="1"/>
</dbReference>
<dbReference type="Pfam" id="PF00410">
    <property type="entry name" value="Ribosomal_S8"/>
    <property type="match status" value="1"/>
</dbReference>
<dbReference type="SUPFAM" id="SSF56047">
    <property type="entry name" value="Ribosomal protein S8"/>
    <property type="match status" value="1"/>
</dbReference>
<dbReference type="PROSITE" id="PS00053">
    <property type="entry name" value="RIBOSOMAL_S8"/>
    <property type="match status" value="1"/>
</dbReference>